<gene>
    <name evidence="1" type="primary">pxpA</name>
    <name type="ordered locus">ML0333</name>
</gene>
<proteinExistence type="inferred from homology"/>
<dbReference type="EC" id="3.5.2.9" evidence="1"/>
<dbReference type="EMBL" id="AL583918">
    <property type="protein sequence ID" value="CAC29841.1"/>
    <property type="molecule type" value="Genomic_DNA"/>
</dbReference>
<dbReference type="PIR" id="E86950">
    <property type="entry name" value="E86950"/>
</dbReference>
<dbReference type="RefSeq" id="NP_301353.1">
    <property type="nucleotide sequence ID" value="NC_002677.1"/>
</dbReference>
<dbReference type="RefSeq" id="WP_010907677.1">
    <property type="nucleotide sequence ID" value="NC_002677.1"/>
</dbReference>
<dbReference type="SMR" id="Q9CCW2"/>
<dbReference type="STRING" id="272631.gene:17574152"/>
<dbReference type="KEGG" id="mle:ML0333"/>
<dbReference type="PATRIC" id="fig|272631.5.peg.541"/>
<dbReference type="Leproma" id="ML0333"/>
<dbReference type="eggNOG" id="COG1540">
    <property type="taxonomic scope" value="Bacteria"/>
</dbReference>
<dbReference type="HOGENOM" id="CLU_069535_0_0_11"/>
<dbReference type="OrthoDB" id="9773478at2"/>
<dbReference type="Proteomes" id="UP000000806">
    <property type="component" value="Chromosome"/>
</dbReference>
<dbReference type="GO" id="GO:0017168">
    <property type="term" value="F:5-oxoprolinase (ATP-hydrolyzing) activity"/>
    <property type="evidence" value="ECO:0007669"/>
    <property type="project" value="UniProtKB-UniRule"/>
</dbReference>
<dbReference type="GO" id="GO:0005524">
    <property type="term" value="F:ATP binding"/>
    <property type="evidence" value="ECO:0007669"/>
    <property type="project" value="UniProtKB-UniRule"/>
</dbReference>
<dbReference type="GO" id="GO:0005975">
    <property type="term" value="P:carbohydrate metabolic process"/>
    <property type="evidence" value="ECO:0007669"/>
    <property type="project" value="InterPro"/>
</dbReference>
<dbReference type="CDD" id="cd10787">
    <property type="entry name" value="LamB_YcsF_like"/>
    <property type="match status" value="1"/>
</dbReference>
<dbReference type="Gene3D" id="3.20.20.370">
    <property type="entry name" value="Glycoside hydrolase/deacetylase"/>
    <property type="match status" value="1"/>
</dbReference>
<dbReference type="HAMAP" id="MF_00691">
    <property type="entry name" value="PxpA"/>
    <property type="match status" value="1"/>
</dbReference>
<dbReference type="InterPro" id="IPR011330">
    <property type="entry name" value="Glyco_hydro/deAcase_b/a-brl"/>
</dbReference>
<dbReference type="InterPro" id="IPR005501">
    <property type="entry name" value="LamB/YcsF/PxpA-like"/>
</dbReference>
<dbReference type="NCBIfam" id="NF003814">
    <property type="entry name" value="PRK05406.1-3"/>
    <property type="match status" value="1"/>
</dbReference>
<dbReference type="NCBIfam" id="NF003816">
    <property type="entry name" value="PRK05406.1-5"/>
    <property type="match status" value="1"/>
</dbReference>
<dbReference type="PANTHER" id="PTHR30292:SF0">
    <property type="entry name" value="5-OXOPROLINASE SUBUNIT A"/>
    <property type="match status" value="1"/>
</dbReference>
<dbReference type="PANTHER" id="PTHR30292">
    <property type="entry name" value="UNCHARACTERIZED PROTEIN YBGL-RELATED"/>
    <property type="match status" value="1"/>
</dbReference>
<dbReference type="Pfam" id="PF03746">
    <property type="entry name" value="LamB_YcsF"/>
    <property type="match status" value="1"/>
</dbReference>
<dbReference type="SUPFAM" id="SSF88713">
    <property type="entry name" value="Glycoside hydrolase/deacetylase"/>
    <property type="match status" value="1"/>
</dbReference>
<name>PXPA_MYCLE</name>
<comment type="function">
    <text evidence="1">Catalyzes the cleavage of 5-oxoproline to form L-glutamate coupled to the hydrolysis of ATP to ADP and inorganic phosphate.</text>
</comment>
<comment type="catalytic activity">
    <reaction evidence="1">
        <text>5-oxo-L-proline + ATP + 2 H2O = L-glutamate + ADP + phosphate + H(+)</text>
        <dbReference type="Rhea" id="RHEA:10348"/>
        <dbReference type="ChEBI" id="CHEBI:15377"/>
        <dbReference type="ChEBI" id="CHEBI:15378"/>
        <dbReference type="ChEBI" id="CHEBI:29985"/>
        <dbReference type="ChEBI" id="CHEBI:30616"/>
        <dbReference type="ChEBI" id="CHEBI:43474"/>
        <dbReference type="ChEBI" id="CHEBI:58402"/>
        <dbReference type="ChEBI" id="CHEBI:456216"/>
        <dbReference type="EC" id="3.5.2.9"/>
    </reaction>
</comment>
<comment type="subunit">
    <text evidence="1">Forms a complex composed of PxpA, PxpB and PxpC.</text>
</comment>
<comment type="similarity">
    <text evidence="1">Belongs to the LamB/PxpA family.</text>
</comment>
<organism>
    <name type="scientific">Mycobacterium leprae (strain TN)</name>
    <dbReference type="NCBI Taxonomy" id="272631"/>
    <lineage>
        <taxon>Bacteria</taxon>
        <taxon>Bacillati</taxon>
        <taxon>Actinomycetota</taxon>
        <taxon>Actinomycetes</taxon>
        <taxon>Mycobacteriales</taxon>
        <taxon>Mycobacteriaceae</taxon>
        <taxon>Mycobacterium</taxon>
    </lineage>
</organism>
<sequence length="252" mass="26453">MACIDLNADLGEGFGVWRLGDDEAMLRIVTSANVACGFHAGDPAGLLRVCRLAAERGVRIGAQVSYRDLVGFGRRFIDVTADDLLADVVYQIGALQAIAQTAGSAVSYVKPHGALYNTIVTNREQGAAVAAAIQLVDSTLPVLGLAGSTFFDEAARIGLRTVAEAFADRTYRPDGQLISRREPGAVLHDPAVIAQRVVTMVTTGKATAVDGTQLAVTVESICLHGDSPNAIQMATAVRDQLNAAGIDIRAFC</sequence>
<protein>
    <recommendedName>
        <fullName evidence="1">5-oxoprolinase subunit A</fullName>
        <shortName evidence="1">5-OPase subunit A</shortName>
        <ecNumber evidence="1">3.5.2.9</ecNumber>
    </recommendedName>
    <alternativeName>
        <fullName evidence="1">5-oxoprolinase (ATP-hydrolyzing) subunit A</fullName>
    </alternativeName>
</protein>
<evidence type="ECO:0000255" key="1">
    <source>
        <dbReference type="HAMAP-Rule" id="MF_00691"/>
    </source>
</evidence>
<reference key="1">
    <citation type="journal article" date="2001" name="Nature">
        <title>Massive gene decay in the leprosy bacillus.</title>
        <authorList>
            <person name="Cole S.T."/>
            <person name="Eiglmeier K."/>
            <person name="Parkhill J."/>
            <person name="James K.D."/>
            <person name="Thomson N.R."/>
            <person name="Wheeler P.R."/>
            <person name="Honore N."/>
            <person name="Garnier T."/>
            <person name="Churcher C.M."/>
            <person name="Harris D.E."/>
            <person name="Mungall K.L."/>
            <person name="Basham D."/>
            <person name="Brown D."/>
            <person name="Chillingworth T."/>
            <person name="Connor R."/>
            <person name="Davies R.M."/>
            <person name="Devlin K."/>
            <person name="Duthoy S."/>
            <person name="Feltwell T."/>
            <person name="Fraser A."/>
            <person name="Hamlin N."/>
            <person name="Holroyd S."/>
            <person name="Hornsby T."/>
            <person name="Jagels K."/>
            <person name="Lacroix C."/>
            <person name="Maclean J."/>
            <person name="Moule S."/>
            <person name="Murphy L.D."/>
            <person name="Oliver K."/>
            <person name="Quail M.A."/>
            <person name="Rajandream M.A."/>
            <person name="Rutherford K.M."/>
            <person name="Rutter S."/>
            <person name="Seeger K."/>
            <person name="Simon S."/>
            <person name="Simmonds M."/>
            <person name="Skelton J."/>
            <person name="Squares R."/>
            <person name="Squares S."/>
            <person name="Stevens K."/>
            <person name="Taylor K."/>
            <person name="Whitehead S."/>
            <person name="Woodward J.R."/>
            <person name="Barrell B.G."/>
        </authorList>
    </citation>
    <scope>NUCLEOTIDE SEQUENCE [LARGE SCALE GENOMIC DNA]</scope>
    <source>
        <strain>TN</strain>
    </source>
</reference>
<accession>Q9CCW2</accession>
<feature type="chain" id="PRO_0000185017" description="5-oxoprolinase subunit A">
    <location>
        <begin position="1"/>
        <end position="252"/>
    </location>
</feature>
<keyword id="KW-0067">ATP-binding</keyword>
<keyword id="KW-0378">Hydrolase</keyword>
<keyword id="KW-0547">Nucleotide-binding</keyword>
<keyword id="KW-1185">Reference proteome</keyword>